<name>MIAA_LACLM</name>
<organism>
    <name type="scientific">Lactococcus lactis subsp. cremoris (strain MG1363)</name>
    <dbReference type="NCBI Taxonomy" id="416870"/>
    <lineage>
        <taxon>Bacteria</taxon>
        <taxon>Bacillati</taxon>
        <taxon>Bacillota</taxon>
        <taxon>Bacilli</taxon>
        <taxon>Lactobacillales</taxon>
        <taxon>Streptococcaceae</taxon>
        <taxon>Lactococcus</taxon>
        <taxon>Lactococcus cremoris subsp. cremoris</taxon>
    </lineage>
</organism>
<accession>A2RIU4</accession>
<gene>
    <name evidence="1" type="primary">miaA</name>
    <name type="ordered locus">llmg_0591</name>
</gene>
<protein>
    <recommendedName>
        <fullName evidence="1">tRNA dimethylallyltransferase</fullName>
        <ecNumber evidence="1">2.5.1.75</ecNumber>
    </recommendedName>
    <alternativeName>
        <fullName evidence="1">Dimethylallyl diphosphate:tRNA dimethylallyltransferase</fullName>
        <shortName evidence="1">DMAPP:tRNA dimethylallyltransferase</shortName>
        <shortName evidence="1">DMATase</shortName>
    </alternativeName>
    <alternativeName>
        <fullName evidence="1">Isopentenyl-diphosphate:tRNA isopentenyltransferase</fullName>
        <shortName evidence="1">IPP transferase</shortName>
        <shortName evidence="1">IPPT</shortName>
        <shortName evidence="1">IPTase</shortName>
    </alternativeName>
</protein>
<keyword id="KW-0067">ATP-binding</keyword>
<keyword id="KW-0460">Magnesium</keyword>
<keyword id="KW-0547">Nucleotide-binding</keyword>
<keyword id="KW-0808">Transferase</keyword>
<keyword id="KW-0819">tRNA processing</keyword>
<reference key="1">
    <citation type="journal article" date="2007" name="J. Bacteriol.">
        <title>The complete genome sequence of the lactic acid bacterial paradigm Lactococcus lactis subsp. cremoris MG1363.</title>
        <authorList>
            <person name="Wegmann U."/>
            <person name="O'Connell-Motherway M."/>
            <person name="Zomer A."/>
            <person name="Buist G."/>
            <person name="Shearman C."/>
            <person name="Canchaya C."/>
            <person name="Ventura M."/>
            <person name="Goesmann A."/>
            <person name="Gasson M.J."/>
            <person name="Kuipers O.P."/>
            <person name="van Sinderen D."/>
            <person name="Kok J."/>
        </authorList>
    </citation>
    <scope>NUCLEOTIDE SEQUENCE [LARGE SCALE GENOMIC DNA]</scope>
    <source>
        <strain>MG1363</strain>
    </source>
</reference>
<feature type="chain" id="PRO_1000020614" description="tRNA dimethylallyltransferase">
    <location>
        <begin position="1"/>
        <end position="294"/>
    </location>
</feature>
<feature type="region of interest" description="Interaction with substrate tRNA" evidence="1">
    <location>
        <begin position="36"/>
        <end position="39"/>
    </location>
</feature>
<feature type="binding site" evidence="1">
    <location>
        <begin position="11"/>
        <end position="18"/>
    </location>
    <ligand>
        <name>ATP</name>
        <dbReference type="ChEBI" id="CHEBI:30616"/>
    </ligand>
</feature>
<feature type="binding site" evidence="1">
    <location>
        <begin position="13"/>
        <end position="18"/>
    </location>
    <ligand>
        <name>substrate</name>
    </ligand>
</feature>
<feature type="site" description="Interaction with substrate tRNA" evidence="1">
    <location>
        <position position="102"/>
    </location>
</feature>
<evidence type="ECO:0000255" key="1">
    <source>
        <dbReference type="HAMAP-Rule" id="MF_00185"/>
    </source>
</evidence>
<dbReference type="EC" id="2.5.1.75" evidence="1"/>
<dbReference type="EMBL" id="AM406671">
    <property type="protein sequence ID" value="CAL97191.1"/>
    <property type="molecule type" value="Genomic_DNA"/>
</dbReference>
<dbReference type="RefSeq" id="WP_011834608.1">
    <property type="nucleotide sequence ID" value="NC_009004.1"/>
</dbReference>
<dbReference type="SMR" id="A2RIU4"/>
<dbReference type="STRING" id="416870.llmg_0591"/>
<dbReference type="KEGG" id="llm:llmg_0591"/>
<dbReference type="eggNOG" id="COG0324">
    <property type="taxonomic scope" value="Bacteria"/>
</dbReference>
<dbReference type="HOGENOM" id="CLU_032616_0_1_9"/>
<dbReference type="OrthoDB" id="9776390at2"/>
<dbReference type="PhylomeDB" id="A2RIU4"/>
<dbReference type="Proteomes" id="UP000000364">
    <property type="component" value="Chromosome"/>
</dbReference>
<dbReference type="GO" id="GO:0005524">
    <property type="term" value="F:ATP binding"/>
    <property type="evidence" value="ECO:0007669"/>
    <property type="project" value="UniProtKB-UniRule"/>
</dbReference>
<dbReference type="GO" id="GO:0052381">
    <property type="term" value="F:tRNA dimethylallyltransferase activity"/>
    <property type="evidence" value="ECO:0007669"/>
    <property type="project" value="UniProtKB-UniRule"/>
</dbReference>
<dbReference type="GO" id="GO:0006400">
    <property type="term" value="P:tRNA modification"/>
    <property type="evidence" value="ECO:0007669"/>
    <property type="project" value="TreeGrafter"/>
</dbReference>
<dbReference type="Gene3D" id="3.40.50.300">
    <property type="entry name" value="P-loop containing nucleotide triphosphate hydrolases"/>
    <property type="match status" value="1"/>
</dbReference>
<dbReference type="HAMAP" id="MF_00185">
    <property type="entry name" value="IPP_trans"/>
    <property type="match status" value="1"/>
</dbReference>
<dbReference type="InterPro" id="IPR039657">
    <property type="entry name" value="Dimethylallyltransferase"/>
</dbReference>
<dbReference type="InterPro" id="IPR018022">
    <property type="entry name" value="IPT"/>
</dbReference>
<dbReference type="InterPro" id="IPR027417">
    <property type="entry name" value="P-loop_NTPase"/>
</dbReference>
<dbReference type="NCBIfam" id="TIGR00174">
    <property type="entry name" value="miaA"/>
    <property type="match status" value="1"/>
</dbReference>
<dbReference type="PANTHER" id="PTHR11088">
    <property type="entry name" value="TRNA DIMETHYLALLYLTRANSFERASE"/>
    <property type="match status" value="1"/>
</dbReference>
<dbReference type="PANTHER" id="PTHR11088:SF60">
    <property type="entry name" value="TRNA DIMETHYLALLYLTRANSFERASE"/>
    <property type="match status" value="1"/>
</dbReference>
<dbReference type="Pfam" id="PF01715">
    <property type="entry name" value="IPPT"/>
    <property type="match status" value="1"/>
</dbReference>
<dbReference type="SUPFAM" id="SSF52540">
    <property type="entry name" value="P-loop containing nucleoside triphosphate hydrolases"/>
    <property type="match status" value="1"/>
</dbReference>
<comment type="function">
    <text evidence="1">Catalyzes the transfer of a dimethylallyl group onto the adenine at position 37 in tRNAs that read codons beginning with uridine, leading to the formation of N6-(dimethylallyl)adenosine (i(6)A).</text>
</comment>
<comment type="catalytic activity">
    <reaction evidence="1">
        <text>adenosine(37) in tRNA + dimethylallyl diphosphate = N(6)-dimethylallyladenosine(37) in tRNA + diphosphate</text>
        <dbReference type="Rhea" id="RHEA:26482"/>
        <dbReference type="Rhea" id="RHEA-COMP:10162"/>
        <dbReference type="Rhea" id="RHEA-COMP:10375"/>
        <dbReference type="ChEBI" id="CHEBI:33019"/>
        <dbReference type="ChEBI" id="CHEBI:57623"/>
        <dbReference type="ChEBI" id="CHEBI:74411"/>
        <dbReference type="ChEBI" id="CHEBI:74415"/>
        <dbReference type="EC" id="2.5.1.75"/>
    </reaction>
</comment>
<comment type="cofactor">
    <cofactor evidence="1">
        <name>Mg(2+)</name>
        <dbReference type="ChEBI" id="CHEBI:18420"/>
    </cofactor>
</comment>
<comment type="subunit">
    <text evidence="1">Monomer.</text>
</comment>
<comment type="similarity">
    <text evidence="1">Belongs to the IPP transferase family.</text>
</comment>
<proteinExistence type="inferred from homology"/>
<sequence length="294" mass="33504">MKNNKVLVVVGPTAVGKTALGIDLAIKMNGEIISGDSQQVYQGLDIGTAKVTKAEQALAVHHLIDVRKWTENFSVHDFVMEANRLIEEIIERGNVPIIVGGTGLYIQSLIEGYHLGGQENHQAMMELRETLLALTDEELFEKVLKLNPNFPELNRRRAIRFLELQTFGSTDENSGSDYNFLLIGLNAERKVLYERINQRVEQMMSEGLLSEARSLFEKAPDAQAAKGIGYKEFFPYFSGEISLEDAVELVKRNSRRYAKRQLTWFRNRMEVEFEDVFSETYPDSVFEKVTQFLN</sequence>